<evidence type="ECO:0000250" key="1">
    <source>
        <dbReference type="UniProtKB" id="P82417"/>
    </source>
</evidence>
<evidence type="ECO:0000269" key="2">
    <source>
    </source>
</evidence>
<evidence type="ECO:0000303" key="3">
    <source>
    </source>
</evidence>
<evidence type="ECO:0000303" key="4">
    <source>
    </source>
</evidence>
<evidence type="ECO:0000305" key="5"/>
<evidence type="ECO:0000305" key="6">
    <source>
    </source>
</evidence>
<name>GTX3E_NEOGO</name>
<reference key="1">
    <citation type="journal article" date="2001" name="J. Biol. Chem.">
        <title>Ponericins, new antibacterial and insecticidal peptides from the venom of the ant Pachycondyla goeldii.</title>
        <authorList>
            <person name="Orivel J."/>
            <person name="Redeker V."/>
            <person name="Le Caer J.-P."/>
            <person name="Krier F."/>
            <person name="Revol-Junelles A.-M."/>
            <person name="Longeon A."/>
            <person name="Chafotte A."/>
            <person name="Dejean A."/>
            <person name="Rossier J."/>
        </authorList>
    </citation>
    <scope>PROTEIN SEQUENCE</scope>
    <scope>MASS SPECTROMETRY</scope>
    <scope>SUBCELLULAR LOCATION</scope>
    <source>
        <tissue>Venom</tissue>
    </source>
</reference>
<reference key="2">
    <citation type="journal article" date="2016" name="Toxins">
        <title>The biochemical toxin arsenal from ant venoms.</title>
        <authorList>
            <person name="Touchard A."/>
            <person name="Aili S.R."/>
            <person name="Fox E.G."/>
            <person name="Escoubas P."/>
            <person name="Orivel J."/>
            <person name="Nicholson G.M."/>
            <person name="Dejean A."/>
        </authorList>
    </citation>
    <scope>REVIEW</scope>
    <scope>NOMENCLATURE</scope>
</reference>
<dbReference type="SMR" id="P82418"/>
<dbReference type="GO" id="GO:0005576">
    <property type="term" value="C:extracellular region"/>
    <property type="evidence" value="ECO:0007669"/>
    <property type="project" value="UniProtKB-SubCell"/>
</dbReference>
<dbReference type="GO" id="GO:0042742">
    <property type="term" value="P:defense response to bacterium"/>
    <property type="evidence" value="ECO:0007669"/>
    <property type="project" value="UniProtKB-KW"/>
</dbReference>
<dbReference type="GO" id="GO:0050832">
    <property type="term" value="P:defense response to fungus"/>
    <property type="evidence" value="ECO:0007669"/>
    <property type="project" value="UniProtKB-KW"/>
</dbReference>
<dbReference type="GO" id="GO:0031640">
    <property type="term" value="P:killing of cells of another organism"/>
    <property type="evidence" value="ECO:0007669"/>
    <property type="project" value="UniProtKB-KW"/>
</dbReference>
<dbReference type="InterPro" id="IPR010002">
    <property type="entry name" value="Poneritoxin"/>
</dbReference>
<dbReference type="Pfam" id="PF07442">
    <property type="entry name" value="Ponericin"/>
    <property type="match status" value="1"/>
</dbReference>
<organism>
    <name type="scientific">Neoponera goeldii</name>
    <name type="common">Ponerine ant</name>
    <name type="synonym">Pachycondyla goeldii</name>
    <dbReference type="NCBI Taxonomy" id="3057131"/>
    <lineage>
        <taxon>Eukaryota</taxon>
        <taxon>Metazoa</taxon>
        <taxon>Ecdysozoa</taxon>
        <taxon>Arthropoda</taxon>
        <taxon>Hexapoda</taxon>
        <taxon>Insecta</taxon>
        <taxon>Pterygota</taxon>
        <taxon>Neoptera</taxon>
        <taxon>Endopterygota</taxon>
        <taxon>Hymenoptera</taxon>
        <taxon>Apocrita</taxon>
        <taxon>Aculeata</taxon>
        <taxon>Formicoidea</taxon>
        <taxon>Formicidae</taxon>
        <taxon>Ponerinae</taxon>
        <taxon>Ponerini</taxon>
        <taxon>Neoponera</taxon>
    </lineage>
</organism>
<proteinExistence type="evidence at protein level"/>
<protein>
    <recommendedName>
        <fullName evidence="4">U1-poneritoxin-Ng3e</fullName>
        <shortName evidence="4">U1-PONTX-Ng3e</shortName>
    </recommendedName>
    <alternativeName>
        <fullName evidence="5">Poneratoxin</fullName>
    </alternativeName>
    <alternativeName>
        <fullName evidence="3">Ponericin-G5</fullName>
    </alternativeName>
</protein>
<accession>P82418</accession>
<comment type="function">
    <text evidence="1">Has activity against some Gram-positive bacteria and S.cerevisiae. Has a non-hemolytic activity.</text>
</comment>
<comment type="subcellular location">
    <subcellularLocation>
        <location evidence="2">Secreted</location>
    </subcellularLocation>
</comment>
<comment type="tissue specificity">
    <text evidence="6">Expressed by the venom gland.</text>
</comment>
<comment type="mass spectrometry" mass="3108.11" method="MALDI" evidence="2"/>
<comment type="similarity">
    <text evidence="5">Belongs to the ponericin-G family.</text>
</comment>
<keyword id="KW-0044">Antibiotic</keyword>
<keyword id="KW-0929">Antimicrobial</keyword>
<keyword id="KW-0903">Direct protein sequencing</keyword>
<keyword id="KW-0295">Fungicide</keyword>
<keyword id="KW-0964">Secreted</keyword>
<sequence length="30" mass="3109">GLKDWVKIAGGWLKKKGPGILKAAMAAATQ</sequence>
<feature type="peptide" id="PRO_0000044189" description="U1-poneritoxin-Ng3e" evidence="2">
    <location>
        <begin position="1"/>
        <end position="30"/>
    </location>
</feature>